<dbReference type="EMBL" id="LC416797">
    <property type="protein sequence ID" value="BBF98063.1"/>
    <property type="molecule type" value="mRNA"/>
</dbReference>
<dbReference type="SMR" id="A0A348G6J0"/>
<dbReference type="GO" id="GO:0005576">
    <property type="term" value="C:extracellular region"/>
    <property type="evidence" value="ECO:0007669"/>
    <property type="project" value="UniProtKB-SubCell"/>
</dbReference>
<dbReference type="InterPro" id="IPR049518">
    <property type="entry name" value="Pilosulin"/>
</dbReference>
<dbReference type="Pfam" id="PF17499">
    <property type="entry name" value="Pilosulin"/>
    <property type="match status" value="1"/>
</dbReference>
<sequence length="61" mass="6233">MKLSALSLAFAIILMMTIMYTKADADASADAEADADAEAEAFWGALLAAAIPAITSAIQGK</sequence>
<proteinExistence type="evidence at protein level"/>
<keyword id="KW-0027">Amidation</keyword>
<keyword id="KW-0929">Antimicrobial</keyword>
<keyword id="KW-0964">Secreted</keyword>
<keyword id="KW-0732">Signal</keyword>
<reference key="1">
    <citation type="journal article" date="2017" name="Toxins">
        <title>Combined venom gland transcriptomic and venom peptidomic analysis of the predatory ant Odontomachus monticola.</title>
        <authorList>
            <person name="Kazuma K."/>
            <person name="Masuko K."/>
            <person name="Konno K."/>
            <person name="Inagaki H."/>
        </authorList>
    </citation>
    <scope>NUCLEOTIDE SEQUENCE [MRNA]</scope>
    <source>
        <tissue>Venom gland</tissue>
    </source>
</reference>
<reference key="2">
    <citation type="journal article" date="2019" name="Toxins">
        <title>Mass spectrometry analysis and biological characterization of the predatory ant Odontomachus monticola venom and venom sac components.</title>
        <authorList>
            <person name="Tani N."/>
            <person name="Kazuma K."/>
            <person name="Ohtsuka Y."/>
            <person name="Shigeri Y."/>
            <person name="Masuko K."/>
            <person name="Konno K."/>
            <person name="Inagaki H."/>
        </authorList>
    </citation>
    <scope>IDENTIFICATION BY MASS SPECTROMETRY</scope>
    <scope>SUBCELLULAR LOCATION</scope>
    <source>
        <tissue>Venom</tissue>
    </source>
</reference>
<name>TX18A_ODOMO</name>
<protein>
    <recommendedName>
        <fullName evidence="2">U-poneritoxin(01)-Om5b</fullName>
        <shortName evidence="2">U-PONTX(01)-Om5b</shortName>
    </recommendedName>
    <alternativeName>
        <fullName evidence="9">Pilosulin-like peptide 8</fullName>
        <shortName evidence="3">PLP8</shortName>
    </alternativeName>
    <alternativeName>
        <fullName evidence="6">Poneratoxin</fullName>
    </alternativeName>
</protein>
<comment type="function">
    <text evidence="1">Acidic peptide with potent hemolytic activities. It also shows low antimicrobial activities against E.coli (MIC=50uM), as well as histamine-releasing activity (28.3% at 10 uM). Does not have activity against S.aureus, and S.cerevisiae.</text>
</comment>
<comment type="subcellular location">
    <subcellularLocation>
        <location evidence="7">Secreted</location>
    </subcellularLocation>
</comment>
<comment type="tissue specificity">
    <text evidence="7">Expressed by the venom gland.</text>
</comment>
<comment type="PTM">
    <text evidence="8">Truncated sequences of this peptide have also been found in the venom. It is possible they have been cleaved in the venom.</text>
</comment>
<comment type="similarity">
    <text evidence="6">Belongs to the formicidae venom precursor-01 superfamily.</text>
</comment>
<evidence type="ECO:0000250" key="1">
    <source>
        <dbReference type="UniProtKB" id="A0A348G5W1"/>
    </source>
</evidence>
<evidence type="ECO:0000250" key="2">
    <source>
        <dbReference type="UniProtKB" id="A0A348G5W2"/>
    </source>
</evidence>
<evidence type="ECO:0000250" key="3">
    <source>
        <dbReference type="UniProtKB" id="A0A348G6I7"/>
    </source>
</evidence>
<evidence type="ECO:0000255" key="4"/>
<evidence type="ECO:0000269" key="5">
    <source>
    </source>
</evidence>
<evidence type="ECO:0000305" key="6"/>
<evidence type="ECO:0000305" key="7">
    <source>
    </source>
</evidence>
<evidence type="ECO:0000305" key="8">
    <source>
    </source>
</evidence>
<evidence type="ECO:0000312" key="9">
    <source>
        <dbReference type="EMBL" id="BBF98063.1"/>
    </source>
</evidence>
<feature type="signal peptide" evidence="4">
    <location>
        <begin position="1"/>
        <end position="23"/>
    </location>
</feature>
<feature type="propeptide" id="PRO_0000447081" evidence="1">
    <location>
        <begin position="24"/>
        <end position="41"/>
    </location>
</feature>
<feature type="peptide" id="PRO_5016831533" description="U-poneritoxin(01)-Om5b" evidence="5">
    <location>
        <begin position="42"/>
        <end position="59"/>
    </location>
</feature>
<feature type="modified residue" description="Glutamine amide" evidence="1">
    <location>
        <position position="59"/>
    </location>
</feature>
<organism>
    <name type="scientific">Odontomachus monticola</name>
    <name type="common">Trap-jaw ant</name>
    <dbReference type="NCBI Taxonomy" id="613454"/>
    <lineage>
        <taxon>Eukaryota</taxon>
        <taxon>Metazoa</taxon>
        <taxon>Ecdysozoa</taxon>
        <taxon>Arthropoda</taxon>
        <taxon>Hexapoda</taxon>
        <taxon>Insecta</taxon>
        <taxon>Pterygota</taxon>
        <taxon>Neoptera</taxon>
        <taxon>Endopterygota</taxon>
        <taxon>Hymenoptera</taxon>
        <taxon>Apocrita</taxon>
        <taxon>Aculeata</taxon>
        <taxon>Formicoidea</taxon>
        <taxon>Formicidae</taxon>
        <taxon>Ponerinae</taxon>
        <taxon>Ponerini</taxon>
        <taxon>Odontomachus</taxon>
    </lineage>
</organism>
<accession>A0A348G6J0</accession>